<sequence>MAASARPVGVGGERATSFAMACSLLSRYVRQNGAAAAELGLGIRGEGEAPRAAPGTMSLLPGEAERKKETMELFPQSAGFGQQDAITADSAADAREQEPEKRQLTIFYGGKVLVFNDFPADKAKGLMQLASKGSTVAPQNAVAPAPAAVTDNTKAPMAVPAPVSSLPTAQADAQKPARANASDMPIARKASLHRFLEKRKDRLNAKTPYQASPSDATPVKKEPESQPWLGLGPNAVVKPIERGQ</sequence>
<protein>
    <recommendedName>
        <fullName evidence="6">Protein TIFY 10b</fullName>
    </recommendedName>
</protein>
<dbReference type="EMBL" id="CM000132">
    <property type="protein sequence ID" value="EAZ04703.1"/>
    <property type="molecule type" value="Genomic_DNA"/>
</dbReference>
<dbReference type="SMR" id="A2YNP2"/>
<dbReference type="STRING" id="39946.A2YNP2"/>
<dbReference type="EnsemblPlants" id="BGIOSGA026133-TA">
    <property type="protein sequence ID" value="BGIOSGA026133-PA"/>
    <property type="gene ID" value="BGIOSGA026133"/>
</dbReference>
<dbReference type="EnsemblPlants" id="OsGoSa_07g0022980.01">
    <property type="protein sequence ID" value="OsGoSa_07g0022980.01"/>
    <property type="gene ID" value="OsGoSa_07g0022980"/>
</dbReference>
<dbReference type="EnsemblPlants" id="OsGoSa_07g0022980.02">
    <property type="protein sequence ID" value="OsGoSa_07g0022980.02"/>
    <property type="gene ID" value="OsGoSa_07g0022980"/>
</dbReference>
<dbReference type="EnsemblPlants" id="OsIR64_07g0023650.01">
    <property type="protein sequence ID" value="OsIR64_07g0023650.01"/>
    <property type="gene ID" value="OsIR64_07g0023650"/>
</dbReference>
<dbReference type="EnsemblPlants" id="OsIR64_07g0023650.02">
    <property type="protein sequence ID" value="OsIR64_07g0023650.02"/>
    <property type="gene ID" value="OsIR64_07g0023650"/>
</dbReference>
<dbReference type="EnsemblPlants" id="OsKYG_07g0023100.01">
    <property type="protein sequence ID" value="OsKYG_07g0023100.01"/>
    <property type="gene ID" value="OsKYG_07g0023100"/>
</dbReference>
<dbReference type="EnsemblPlants" id="OsKYG_07g0023100.02">
    <property type="protein sequence ID" value="OsKYG_07g0023100.02"/>
    <property type="gene ID" value="OsKYG_07g0023100"/>
</dbReference>
<dbReference type="EnsemblPlants" id="OsLaMu_07g0022960.01">
    <property type="protein sequence ID" value="OsLaMu_07g0022960.01"/>
    <property type="gene ID" value="OsLaMu_07g0022960"/>
</dbReference>
<dbReference type="EnsemblPlants" id="OsLaMu_07g0022960.02">
    <property type="protein sequence ID" value="OsLaMu_07g0022960.02"/>
    <property type="gene ID" value="OsLaMu_07g0022960"/>
</dbReference>
<dbReference type="EnsemblPlants" id="OsLima_07g0022960.01">
    <property type="protein sequence ID" value="OsLima_07g0022960.01"/>
    <property type="gene ID" value="OsLima_07g0022960"/>
</dbReference>
<dbReference type="EnsemblPlants" id="OsLima_07g0022960.02">
    <property type="protein sequence ID" value="OsLima_07g0022960.02"/>
    <property type="gene ID" value="OsLima_07g0022960"/>
</dbReference>
<dbReference type="EnsemblPlants" id="OsLiXu_07g0023190.01">
    <property type="protein sequence ID" value="OsLiXu_07g0023190.01"/>
    <property type="gene ID" value="OsLiXu_07g0023190"/>
</dbReference>
<dbReference type="EnsemblPlants" id="OsLiXu_07g0023190.02">
    <property type="protein sequence ID" value="OsLiXu_07g0023190.02"/>
    <property type="gene ID" value="OsLiXu_07g0023190"/>
</dbReference>
<dbReference type="EnsemblPlants" id="OsMH63_07G022890_01">
    <property type="protein sequence ID" value="OsMH63_07G022890_01"/>
    <property type="gene ID" value="OsMH63_07G022890"/>
</dbReference>
<dbReference type="EnsemblPlants" id="OsMH63_07G022890_02">
    <property type="protein sequence ID" value="OsMH63_07G022890_02"/>
    <property type="gene ID" value="OsMH63_07G022890"/>
</dbReference>
<dbReference type="EnsemblPlants" id="OsPr106_07g0023160.01">
    <property type="protein sequence ID" value="OsPr106_07g0023160.01"/>
    <property type="gene ID" value="OsPr106_07g0023160"/>
</dbReference>
<dbReference type="EnsemblPlants" id="OsPr106_07g0023160.02">
    <property type="protein sequence ID" value="OsPr106_07g0023160.02"/>
    <property type="gene ID" value="OsPr106_07g0023160"/>
</dbReference>
<dbReference type="EnsemblPlants" id="OsZS97_07G022810_01">
    <property type="protein sequence ID" value="OsZS97_07G022810_01"/>
    <property type="gene ID" value="OsZS97_07G022810"/>
</dbReference>
<dbReference type="EnsemblPlants" id="OsZS97_07G022810_02">
    <property type="protein sequence ID" value="OsZS97_07G022810_02"/>
    <property type="gene ID" value="OsZS97_07G022810"/>
</dbReference>
<dbReference type="Gramene" id="BGIOSGA026133-TA">
    <property type="protein sequence ID" value="BGIOSGA026133-PA"/>
    <property type="gene ID" value="BGIOSGA026133"/>
</dbReference>
<dbReference type="Gramene" id="OsGoSa_07g0022980.01">
    <property type="protein sequence ID" value="OsGoSa_07g0022980.01"/>
    <property type="gene ID" value="OsGoSa_07g0022980"/>
</dbReference>
<dbReference type="Gramene" id="OsGoSa_07g0022980.02">
    <property type="protein sequence ID" value="OsGoSa_07g0022980.02"/>
    <property type="gene ID" value="OsGoSa_07g0022980"/>
</dbReference>
<dbReference type="Gramene" id="OsIR64_07g0023650.01">
    <property type="protein sequence ID" value="OsIR64_07g0023650.01"/>
    <property type="gene ID" value="OsIR64_07g0023650"/>
</dbReference>
<dbReference type="Gramene" id="OsIR64_07g0023650.02">
    <property type="protein sequence ID" value="OsIR64_07g0023650.02"/>
    <property type="gene ID" value="OsIR64_07g0023650"/>
</dbReference>
<dbReference type="Gramene" id="OsKYG_07g0023100.01">
    <property type="protein sequence ID" value="OsKYG_07g0023100.01"/>
    <property type="gene ID" value="OsKYG_07g0023100"/>
</dbReference>
<dbReference type="Gramene" id="OsKYG_07g0023100.02">
    <property type="protein sequence ID" value="OsKYG_07g0023100.02"/>
    <property type="gene ID" value="OsKYG_07g0023100"/>
</dbReference>
<dbReference type="Gramene" id="OsLaMu_07g0022960.01">
    <property type="protein sequence ID" value="OsLaMu_07g0022960.01"/>
    <property type="gene ID" value="OsLaMu_07g0022960"/>
</dbReference>
<dbReference type="Gramene" id="OsLaMu_07g0022960.02">
    <property type="protein sequence ID" value="OsLaMu_07g0022960.02"/>
    <property type="gene ID" value="OsLaMu_07g0022960"/>
</dbReference>
<dbReference type="Gramene" id="OsLima_07g0022960.01">
    <property type="protein sequence ID" value="OsLima_07g0022960.01"/>
    <property type="gene ID" value="OsLima_07g0022960"/>
</dbReference>
<dbReference type="Gramene" id="OsLima_07g0022960.02">
    <property type="protein sequence ID" value="OsLima_07g0022960.02"/>
    <property type="gene ID" value="OsLima_07g0022960"/>
</dbReference>
<dbReference type="Gramene" id="OsLiXu_07g0023190.01">
    <property type="protein sequence ID" value="OsLiXu_07g0023190.01"/>
    <property type="gene ID" value="OsLiXu_07g0023190"/>
</dbReference>
<dbReference type="Gramene" id="OsLiXu_07g0023190.02">
    <property type="protein sequence ID" value="OsLiXu_07g0023190.02"/>
    <property type="gene ID" value="OsLiXu_07g0023190"/>
</dbReference>
<dbReference type="Gramene" id="OsMH63_07G022890_01">
    <property type="protein sequence ID" value="OsMH63_07G022890_01"/>
    <property type="gene ID" value="OsMH63_07G022890"/>
</dbReference>
<dbReference type="Gramene" id="OsMH63_07G022890_02">
    <property type="protein sequence ID" value="OsMH63_07G022890_02"/>
    <property type="gene ID" value="OsMH63_07G022890"/>
</dbReference>
<dbReference type="Gramene" id="OsPr106_07g0023160.01">
    <property type="protein sequence ID" value="OsPr106_07g0023160.01"/>
    <property type="gene ID" value="OsPr106_07g0023160"/>
</dbReference>
<dbReference type="Gramene" id="OsPr106_07g0023160.02">
    <property type="protein sequence ID" value="OsPr106_07g0023160.02"/>
    <property type="gene ID" value="OsPr106_07g0023160"/>
</dbReference>
<dbReference type="Gramene" id="OsZS97_07G022810_01">
    <property type="protein sequence ID" value="OsZS97_07G022810_01"/>
    <property type="gene ID" value="OsZS97_07G022810"/>
</dbReference>
<dbReference type="Gramene" id="OsZS97_07G022810_02">
    <property type="protein sequence ID" value="OsZS97_07G022810_02"/>
    <property type="gene ID" value="OsZS97_07G022810"/>
</dbReference>
<dbReference type="HOGENOM" id="CLU_051749_1_1_1"/>
<dbReference type="OMA" id="EPQKAQM"/>
<dbReference type="OrthoDB" id="1937734at2759"/>
<dbReference type="Proteomes" id="UP000007015">
    <property type="component" value="Chromosome 7"/>
</dbReference>
<dbReference type="GO" id="GO:0005634">
    <property type="term" value="C:nucleus"/>
    <property type="evidence" value="ECO:0007669"/>
    <property type="project" value="UniProtKB-SubCell"/>
</dbReference>
<dbReference type="GO" id="GO:0031347">
    <property type="term" value="P:regulation of defense response"/>
    <property type="evidence" value="ECO:0007669"/>
    <property type="project" value="TreeGrafter"/>
</dbReference>
<dbReference type="GO" id="GO:2000022">
    <property type="term" value="P:regulation of jasmonic acid mediated signaling pathway"/>
    <property type="evidence" value="ECO:0007669"/>
    <property type="project" value="TreeGrafter"/>
</dbReference>
<dbReference type="GO" id="GO:0009611">
    <property type="term" value="P:response to wounding"/>
    <property type="evidence" value="ECO:0007669"/>
    <property type="project" value="TreeGrafter"/>
</dbReference>
<dbReference type="InterPro" id="IPR018467">
    <property type="entry name" value="CCT_CS"/>
</dbReference>
<dbReference type="InterPro" id="IPR040390">
    <property type="entry name" value="TIFY/JAZ"/>
</dbReference>
<dbReference type="InterPro" id="IPR010399">
    <property type="entry name" value="Tify_dom"/>
</dbReference>
<dbReference type="PANTHER" id="PTHR33077:SF140">
    <property type="entry name" value="PROTEIN TIFY 10B"/>
    <property type="match status" value="1"/>
</dbReference>
<dbReference type="PANTHER" id="PTHR33077">
    <property type="entry name" value="PROTEIN TIFY 4A-RELATED-RELATED"/>
    <property type="match status" value="1"/>
</dbReference>
<dbReference type="Pfam" id="PF09425">
    <property type="entry name" value="Jas_motif"/>
    <property type="match status" value="1"/>
</dbReference>
<dbReference type="Pfam" id="PF06200">
    <property type="entry name" value="tify"/>
    <property type="match status" value="1"/>
</dbReference>
<dbReference type="SMART" id="SM00979">
    <property type="entry name" value="TIFY"/>
    <property type="match status" value="1"/>
</dbReference>
<dbReference type="PROSITE" id="PS51320">
    <property type="entry name" value="TIFY"/>
    <property type="match status" value="1"/>
</dbReference>
<keyword id="KW-1184">Jasmonic acid signaling pathway</keyword>
<keyword id="KW-0539">Nucleus</keyword>
<keyword id="KW-1185">Reference proteome</keyword>
<keyword id="KW-0804">Transcription</keyword>
<keyword id="KW-0805">Transcription regulation</keyword>
<keyword id="KW-0832">Ubl conjugation</keyword>
<gene>
    <name evidence="6" type="primary">TIFY10B</name>
    <name evidence="6" type="synonym">JAZ7</name>
    <name evidence="7" type="ORF">OsI_26864</name>
</gene>
<feature type="chain" id="PRO_0000434850" description="Protein TIFY 10b">
    <location>
        <begin position="1"/>
        <end position="244"/>
    </location>
</feature>
<feature type="domain" description="Tify" evidence="3">
    <location>
        <begin position="97"/>
        <end position="132"/>
    </location>
</feature>
<feature type="region of interest" description="Disordered" evidence="5">
    <location>
        <begin position="193"/>
        <end position="244"/>
    </location>
</feature>
<feature type="short sequence motif" description="Jas" evidence="2">
    <location>
        <begin position="185"/>
        <end position="210"/>
    </location>
</feature>
<feature type="short sequence motif" description="Nuclear localization signal" evidence="4">
    <location>
        <begin position="187"/>
        <end position="194"/>
    </location>
</feature>
<feature type="compositionally biased region" description="Basic and acidic residues" evidence="5">
    <location>
        <begin position="194"/>
        <end position="204"/>
    </location>
</feature>
<reference key="1">
    <citation type="journal article" date="2005" name="PLoS Biol.">
        <title>The genomes of Oryza sativa: a history of duplications.</title>
        <authorList>
            <person name="Yu J."/>
            <person name="Wang J."/>
            <person name="Lin W."/>
            <person name="Li S."/>
            <person name="Li H."/>
            <person name="Zhou J."/>
            <person name="Ni P."/>
            <person name="Dong W."/>
            <person name="Hu S."/>
            <person name="Zeng C."/>
            <person name="Zhang J."/>
            <person name="Zhang Y."/>
            <person name="Li R."/>
            <person name="Xu Z."/>
            <person name="Li S."/>
            <person name="Li X."/>
            <person name="Zheng H."/>
            <person name="Cong L."/>
            <person name="Lin L."/>
            <person name="Yin J."/>
            <person name="Geng J."/>
            <person name="Li G."/>
            <person name="Shi J."/>
            <person name="Liu J."/>
            <person name="Lv H."/>
            <person name="Li J."/>
            <person name="Wang J."/>
            <person name="Deng Y."/>
            <person name="Ran L."/>
            <person name="Shi X."/>
            <person name="Wang X."/>
            <person name="Wu Q."/>
            <person name="Li C."/>
            <person name="Ren X."/>
            <person name="Wang J."/>
            <person name="Wang X."/>
            <person name="Li D."/>
            <person name="Liu D."/>
            <person name="Zhang X."/>
            <person name="Ji Z."/>
            <person name="Zhao W."/>
            <person name="Sun Y."/>
            <person name="Zhang Z."/>
            <person name="Bao J."/>
            <person name="Han Y."/>
            <person name="Dong L."/>
            <person name="Ji J."/>
            <person name="Chen P."/>
            <person name="Wu S."/>
            <person name="Liu J."/>
            <person name="Xiao Y."/>
            <person name="Bu D."/>
            <person name="Tan J."/>
            <person name="Yang L."/>
            <person name="Ye C."/>
            <person name="Zhang J."/>
            <person name="Xu J."/>
            <person name="Zhou Y."/>
            <person name="Yu Y."/>
            <person name="Zhang B."/>
            <person name="Zhuang S."/>
            <person name="Wei H."/>
            <person name="Liu B."/>
            <person name="Lei M."/>
            <person name="Yu H."/>
            <person name="Li Y."/>
            <person name="Xu H."/>
            <person name="Wei S."/>
            <person name="He X."/>
            <person name="Fang L."/>
            <person name="Zhang Z."/>
            <person name="Zhang Y."/>
            <person name="Huang X."/>
            <person name="Su Z."/>
            <person name="Tong W."/>
            <person name="Li J."/>
            <person name="Tong Z."/>
            <person name="Li S."/>
            <person name="Ye J."/>
            <person name="Wang L."/>
            <person name="Fang L."/>
            <person name="Lei T."/>
            <person name="Chen C.-S."/>
            <person name="Chen H.-C."/>
            <person name="Xu Z."/>
            <person name="Li H."/>
            <person name="Huang H."/>
            <person name="Zhang F."/>
            <person name="Xu H."/>
            <person name="Li N."/>
            <person name="Zhao C."/>
            <person name="Li S."/>
            <person name="Dong L."/>
            <person name="Huang Y."/>
            <person name="Li L."/>
            <person name="Xi Y."/>
            <person name="Qi Q."/>
            <person name="Li W."/>
            <person name="Zhang B."/>
            <person name="Hu W."/>
            <person name="Zhang Y."/>
            <person name="Tian X."/>
            <person name="Jiao Y."/>
            <person name="Liang X."/>
            <person name="Jin J."/>
            <person name="Gao L."/>
            <person name="Zheng W."/>
            <person name="Hao B."/>
            <person name="Liu S.-M."/>
            <person name="Wang W."/>
            <person name="Yuan L."/>
            <person name="Cao M."/>
            <person name="McDermott J."/>
            <person name="Samudrala R."/>
            <person name="Wang J."/>
            <person name="Wong G.K.-S."/>
            <person name="Yang H."/>
        </authorList>
    </citation>
    <scope>NUCLEOTIDE SEQUENCE [LARGE SCALE GENOMIC DNA]</scope>
    <source>
        <strain>cv. 93-11</strain>
    </source>
</reference>
<proteinExistence type="inferred from homology"/>
<comment type="function">
    <text evidence="1">Repressor of jasmonate responses.</text>
</comment>
<comment type="subcellular location">
    <subcellularLocation>
        <location evidence="4">Nucleus</location>
    </subcellularLocation>
</comment>
<comment type="domain">
    <text evidence="1">The jas domain (185-210) is required for interaction with COI1.</text>
</comment>
<comment type="PTM">
    <text evidence="1">Ubiquitinated. Targeted for degradation by the SCF(COI1) E3 ubiquitin ligase-proteasome pathway during jasmonate signaling.</text>
</comment>
<comment type="similarity">
    <text evidence="6">Belongs to the TIFY/JAZ family.</text>
</comment>
<evidence type="ECO:0000250" key="1">
    <source>
        <dbReference type="UniProtKB" id="Q7XPM8"/>
    </source>
</evidence>
<evidence type="ECO:0000255" key="2"/>
<evidence type="ECO:0000255" key="3">
    <source>
        <dbReference type="PROSITE-ProRule" id="PRU00650"/>
    </source>
</evidence>
<evidence type="ECO:0000255" key="4">
    <source>
        <dbReference type="PROSITE-ProRule" id="PRU00768"/>
    </source>
</evidence>
<evidence type="ECO:0000256" key="5">
    <source>
        <dbReference type="SAM" id="MobiDB-lite"/>
    </source>
</evidence>
<evidence type="ECO:0000305" key="6"/>
<evidence type="ECO:0000312" key="7">
    <source>
        <dbReference type="EMBL" id="EAZ04703.1"/>
    </source>
</evidence>
<name>TI10B_ORYSI</name>
<accession>A2YNP2</accession>
<organism>
    <name type="scientific">Oryza sativa subsp. indica</name>
    <name type="common">Rice</name>
    <dbReference type="NCBI Taxonomy" id="39946"/>
    <lineage>
        <taxon>Eukaryota</taxon>
        <taxon>Viridiplantae</taxon>
        <taxon>Streptophyta</taxon>
        <taxon>Embryophyta</taxon>
        <taxon>Tracheophyta</taxon>
        <taxon>Spermatophyta</taxon>
        <taxon>Magnoliopsida</taxon>
        <taxon>Liliopsida</taxon>
        <taxon>Poales</taxon>
        <taxon>Poaceae</taxon>
        <taxon>BOP clade</taxon>
        <taxon>Oryzoideae</taxon>
        <taxon>Oryzeae</taxon>
        <taxon>Oryzinae</taxon>
        <taxon>Oryza</taxon>
        <taxon>Oryza sativa</taxon>
    </lineage>
</organism>